<accession>B4EBP5</accession>
<organism>
    <name type="scientific">Burkholderia cenocepacia (strain ATCC BAA-245 / DSM 16553 / LMG 16656 / NCTC 13227 / J2315 / CF5610)</name>
    <name type="common">Burkholderia cepacia (strain J2315)</name>
    <dbReference type="NCBI Taxonomy" id="216591"/>
    <lineage>
        <taxon>Bacteria</taxon>
        <taxon>Pseudomonadati</taxon>
        <taxon>Pseudomonadota</taxon>
        <taxon>Betaproteobacteria</taxon>
        <taxon>Burkholderiales</taxon>
        <taxon>Burkholderiaceae</taxon>
        <taxon>Burkholderia</taxon>
        <taxon>Burkholderia cepacia complex</taxon>
    </lineage>
</organism>
<evidence type="ECO:0000255" key="1">
    <source>
        <dbReference type="HAMAP-Rule" id="MF_00366"/>
    </source>
</evidence>
<gene>
    <name evidence="1" type="primary">rpoZ</name>
    <name type="ordered locus">BceJ2315_29570</name>
    <name type="ORF">BCAL3011</name>
</gene>
<dbReference type="EC" id="2.7.7.6" evidence="1"/>
<dbReference type="EMBL" id="AM747720">
    <property type="protein sequence ID" value="CAR53333.1"/>
    <property type="molecule type" value="Genomic_DNA"/>
</dbReference>
<dbReference type="RefSeq" id="WP_006025620.1">
    <property type="nucleotide sequence ID" value="NC_011000.1"/>
</dbReference>
<dbReference type="SMR" id="B4EBP5"/>
<dbReference type="GeneID" id="98102617"/>
<dbReference type="KEGG" id="bcj:BCAL3011"/>
<dbReference type="eggNOG" id="COG1758">
    <property type="taxonomic scope" value="Bacteria"/>
</dbReference>
<dbReference type="HOGENOM" id="CLU_125406_5_2_4"/>
<dbReference type="BioCyc" id="BCEN216591:G1G1V-3335-MONOMER"/>
<dbReference type="Proteomes" id="UP000001035">
    <property type="component" value="Chromosome 1"/>
</dbReference>
<dbReference type="GO" id="GO:0000428">
    <property type="term" value="C:DNA-directed RNA polymerase complex"/>
    <property type="evidence" value="ECO:0007669"/>
    <property type="project" value="UniProtKB-KW"/>
</dbReference>
<dbReference type="GO" id="GO:0003677">
    <property type="term" value="F:DNA binding"/>
    <property type="evidence" value="ECO:0007669"/>
    <property type="project" value="UniProtKB-UniRule"/>
</dbReference>
<dbReference type="GO" id="GO:0003899">
    <property type="term" value="F:DNA-directed RNA polymerase activity"/>
    <property type="evidence" value="ECO:0007669"/>
    <property type="project" value="UniProtKB-UniRule"/>
</dbReference>
<dbReference type="GO" id="GO:0006351">
    <property type="term" value="P:DNA-templated transcription"/>
    <property type="evidence" value="ECO:0007669"/>
    <property type="project" value="UniProtKB-UniRule"/>
</dbReference>
<dbReference type="Gene3D" id="3.90.940.10">
    <property type="match status" value="1"/>
</dbReference>
<dbReference type="HAMAP" id="MF_00366">
    <property type="entry name" value="RNApol_bact_RpoZ"/>
    <property type="match status" value="1"/>
</dbReference>
<dbReference type="InterPro" id="IPR003716">
    <property type="entry name" value="DNA-dir_RNA_pol_omega"/>
</dbReference>
<dbReference type="InterPro" id="IPR006110">
    <property type="entry name" value="Pol_omega/Rpo6/RPB6"/>
</dbReference>
<dbReference type="InterPro" id="IPR036161">
    <property type="entry name" value="RPB6/omega-like_sf"/>
</dbReference>
<dbReference type="NCBIfam" id="TIGR00690">
    <property type="entry name" value="rpoZ"/>
    <property type="match status" value="1"/>
</dbReference>
<dbReference type="PANTHER" id="PTHR34476">
    <property type="entry name" value="DNA-DIRECTED RNA POLYMERASE SUBUNIT OMEGA"/>
    <property type="match status" value="1"/>
</dbReference>
<dbReference type="PANTHER" id="PTHR34476:SF1">
    <property type="entry name" value="DNA-DIRECTED RNA POLYMERASE SUBUNIT OMEGA"/>
    <property type="match status" value="1"/>
</dbReference>
<dbReference type="Pfam" id="PF01192">
    <property type="entry name" value="RNA_pol_Rpb6"/>
    <property type="match status" value="1"/>
</dbReference>
<dbReference type="SMART" id="SM01409">
    <property type="entry name" value="RNA_pol_Rpb6"/>
    <property type="match status" value="1"/>
</dbReference>
<dbReference type="SUPFAM" id="SSF63562">
    <property type="entry name" value="RPB6/omega subunit-like"/>
    <property type="match status" value="1"/>
</dbReference>
<feature type="chain" id="PRO_1000121197" description="DNA-directed RNA polymerase subunit omega">
    <location>
        <begin position="1"/>
        <end position="67"/>
    </location>
</feature>
<proteinExistence type="inferred from homology"/>
<keyword id="KW-0240">DNA-directed RNA polymerase</keyword>
<keyword id="KW-0548">Nucleotidyltransferase</keyword>
<keyword id="KW-0804">Transcription</keyword>
<keyword id="KW-0808">Transferase</keyword>
<comment type="function">
    <text evidence="1">Promotes RNA polymerase assembly. Latches the N- and C-terminal regions of the beta' subunit thereby facilitating its interaction with the beta and alpha subunits.</text>
</comment>
<comment type="catalytic activity">
    <reaction evidence="1">
        <text>RNA(n) + a ribonucleoside 5'-triphosphate = RNA(n+1) + diphosphate</text>
        <dbReference type="Rhea" id="RHEA:21248"/>
        <dbReference type="Rhea" id="RHEA-COMP:14527"/>
        <dbReference type="Rhea" id="RHEA-COMP:17342"/>
        <dbReference type="ChEBI" id="CHEBI:33019"/>
        <dbReference type="ChEBI" id="CHEBI:61557"/>
        <dbReference type="ChEBI" id="CHEBI:140395"/>
        <dbReference type="EC" id="2.7.7.6"/>
    </reaction>
</comment>
<comment type="subunit">
    <text evidence="1">The RNAP catalytic core consists of 2 alpha, 1 beta, 1 beta' and 1 omega subunit. When a sigma factor is associated with the core the holoenzyme is formed, which can initiate transcription.</text>
</comment>
<comment type="similarity">
    <text evidence="1">Belongs to the RNA polymerase subunit omega family.</text>
</comment>
<protein>
    <recommendedName>
        <fullName evidence="1">DNA-directed RNA polymerase subunit omega</fullName>
        <shortName evidence="1">RNAP omega subunit</shortName>
        <ecNumber evidence="1">2.7.7.6</ecNumber>
    </recommendedName>
    <alternativeName>
        <fullName evidence="1">RNA polymerase omega subunit</fullName>
    </alternativeName>
    <alternativeName>
        <fullName evidence="1">Transcriptase subunit omega</fullName>
    </alternativeName>
</protein>
<name>RPOZ_BURCJ</name>
<sequence>MARITVEDCLKQIPNRFELALAATYRARQLAQGHTPKIESRDKPTVVALREIAAGQVGVEMLKKVPV</sequence>
<reference key="1">
    <citation type="journal article" date="2009" name="J. Bacteriol.">
        <title>The genome of Burkholderia cenocepacia J2315, an epidemic pathogen of cystic fibrosis patients.</title>
        <authorList>
            <person name="Holden M.T."/>
            <person name="Seth-Smith H.M."/>
            <person name="Crossman L.C."/>
            <person name="Sebaihia M."/>
            <person name="Bentley S.D."/>
            <person name="Cerdeno-Tarraga A.M."/>
            <person name="Thomson N.R."/>
            <person name="Bason N."/>
            <person name="Quail M.A."/>
            <person name="Sharp S."/>
            <person name="Cherevach I."/>
            <person name="Churcher C."/>
            <person name="Goodhead I."/>
            <person name="Hauser H."/>
            <person name="Holroyd N."/>
            <person name="Mungall K."/>
            <person name="Scott P."/>
            <person name="Walker D."/>
            <person name="White B."/>
            <person name="Rose H."/>
            <person name="Iversen P."/>
            <person name="Mil-Homens D."/>
            <person name="Rocha E.P."/>
            <person name="Fialho A.M."/>
            <person name="Baldwin A."/>
            <person name="Dowson C."/>
            <person name="Barrell B.G."/>
            <person name="Govan J.R."/>
            <person name="Vandamme P."/>
            <person name="Hart C.A."/>
            <person name="Mahenthiralingam E."/>
            <person name="Parkhill J."/>
        </authorList>
    </citation>
    <scope>NUCLEOTIDE SEQUENCE [LARGE SCALE GENOMIC DNA]</scope>
    <source>
        <strain>ATCC BAA-245 / DSM 16553 / LMG 16656 / NCTC 13227 / J2315 / CF5610</strain>
    </source>
</reference>